<comment type="function">
    <text evidence="1 2">Catalyzes the conversion of inosine 5'-phosphate (IMP) to xanthosine 5'-phosphate (XMP), the first committed and rate-limiting step in the de novo synthesis of guanine nucleotides, and therefore plays an important role in the regulation of cell growth.</text>
</comment>
<comment type="catalytic activity">
    <reaction evidence="1">
        <text>IMP + NAD(+) + H2O = XMP + NADH + H(+)</text>
        <dbReference type="Rhea" id="RHEA:11708"/>
        <dbReference type="ChEBI" id="CHEBI:15377"/>
        <dbReference type="ChEBI" id="CHEBI:15378"/>
        <dbReference type="ChEBI" id="CHEBI:57464"/>
        <dbReference type="ChEBI" id="CHEBI:57540"/>
        <dbReference type="ChEBI" id="CHEBI:57945"/>
        <dbReference type="ChEBI" id="CHEBI:58053"/>
        <dbReference type="EC" id="1.1.1.205"/>
    </reaction>
</comment>
<comment type="cofactor">
    <cofactor evidence="1">
        <name>K(+)</name>
        <dbReference type="ChEBI" id="CHEBI:29103"/>
    </cofactor>
</comment>
<comment type="activity regulation">
    <text evidence="1 2">Mycophenolic acid (MPA) is a non-competitive inhibitor that prevents formation of the closed enzyme conformation by binding to the same site as the amobile flap. In contrast, mizoribine monophosphate (MZP) is a competitive inhibitor that induces the closed conformation. MPA is a potent inhibitor of mammalian IMPDHs but a poor inhibitor of the bacterial enzymes. MZP is a more potent inhibitor of bacterial IMPDH. Also inhibited by ADP.</text>
</comment>
<comment type="biophysicochemical properties">
    <kinetics>
        <KM evidence="2">60 uM for Inosine 5'-phosphate</KM>
        <KM evidence="2">3500 uM for NAD(+)</KM>
    </kinetics>
</comment>
<comment type="pathway">
    <text evidence="1">Purine metabolism; XMP biosynthesis via de novo pathway; XMP from IMP: step 1/1.</text>
</comment>
<comment type="subunit">
    <text evidence="1">Homotetramer.</text>
</comment>
<comment type="subcellular location">
    <subcellularLocation>
        <location evidence="1">Cytoplasm</location>
    </subcellularLocation>
</comment>
<comment type="similarity">
    <text evidence="1">Belongs to the IMPDH/GMPR family.</text>
</comment>
<feature type="chain" id="PRO_0000415684" description="Inosine-5'-monophosphate dehydrogenase">
    <location>
        <begin position="1"/>
        <end position="521"/>
    </location>
</feature>
<feature type="domain" description="CBS 1" evidence="1">
    <location>
        <begin position="119"/>
        <end position="178"/>
    </location>
</feature>
<feature type="domain" description="CBS 2" evidence="1">
    <location>
        <begin position="182"/>
        <end position="238"/>
    </location>
</feature>
<feature type="active site" description="Thioimidate intermediate" evidence="1">
    <location>
        <position position="333"/>
    </location>
</feature>
<feature type="active site" description="Proton acceptor" evidence="1">
    <location>
        <position position="435"/>
    </location>
</feature>
<feature type="binding site" evidence="1">
    <location>
        <begin position="276"/>
        <end position="278"/>
    </location>
    <ligand>
        <name>NAD(+)</name>
        <dbReference type="ChEBI" id="CHEBI:57540"/>
    </ligand>
</feature>
<feature type="binding site" evidence="1">
    <location>
        <begin position="326"/>
        <end position="328"/>
    </location>
    <ligand>
        <name>NAD(+)</name>
        <dbReference type="ChEBI" id="CHEBI:57540"/>
    </ligand>
</feature>
<feature type="binding site" description="in other chain" evidence="1">
    <location>
        <position position="328"/>
    </location>
    <ligand>
        <name>K(+)</name>
        <dbReference type="ChEBI" id="CHEBI:29103"/>
        <note>ligand shared between two tetrameric partners</note>
    </ligand>
</feature>
<feature type="binding site" description="in other chain" evidence="1">
    <location>
        <position position="330"/>
    </location>
    <ligand>
        <name>K(+)</name>
        <dbReference type="ChEBI" id="CHEBI:29103"/>
        <note>ligand shared between two tetrameric partners</note>
    </ligand>
</feature>
<feature type="binding site" evidence="1">
    <location>
        <position position="331"/>
    </location>
    <ligand>
        <name>IMP</name>
        <dbReference type="ChEBI" id="CHEBI:58053"/>
    </ligand>
</feature>
<feature type="binding site" description="in other chain" evidence="1">
    <location>
        <position position="333"/>
    </location>
    <ligand>
        <name>K(+)</name>
        <dbReference type="ChEBI" id="CHEBI:29103"/>
        <note>ligand shared between two tetrameric partners</note>
    </ligand>
</feature>
<feature type="binding site" evidence="1">
    <location>
        <begin position="366"/>
        <end position="368"/>
    </location>
    <ligand>
        <name>IMP</name>
        <dbReference type="ChEBI" id="CHEBI:58053"/>
    </ligand>
</feature>
<feature type="binding site" evidence="1">
    <location>
        <begin position="389"/>
        <end position="390"/>
    </location>
    <ligand>
        <name>IMP</name>
        <dbReference type="ChEBI" id="CHEBI:58053"/>
    </ligand>
</feature>
<feature type="binding site" evidence="1">
    <location>
        <begin position="413"/>
        <end position="417"/>
    </location>
    <ligand>
        <name>IMP</name>
        <dbReference type="ChEBI" id="CHEBI:58053"/>
    </ligand>
</feature>
<feature type="binding site" evidence="1">
    <location>
        <position position="447"/>
    </location>
    <ligand>
        <name>IMP</name>
        <dbReference type="ChEBI" id="CHEBI:58053"/>
    </ligand>
</feature>
<feature type="binding site" evidence="1">
    <location>
        <position position="506"/>
    </location>
    <ligand>
        <name>K(+)</name>
        <dbReference type="ChEBI" id="CHEBI:29103"/>
        <note>ligand shared between two tetrameric partners</note>
    </ligand>
</feature>
<feature type="binding site" evidence="1">
    <location>
        <position position="507"/>
    </location>
    <ligand>
        <name>K(+)</name>
        <dbReference type="ChEBI" id="CHEBI:29103"/>
        <note>ligand shared between two tetrameric partners</note>
    </ligand>
</feature>
<feature type="binding site" evidence="1">
    <location>
        <position position="508"/>
    </location>
    <ligand>
        <name>K(+)</name>
        <dbReference type="ChEBI" id="CHEBI:29103"/>
        <note>ligand shared between two tetrameric partners</note>
    </ligand>
</feature>
<feature type="mutagenesis site" description="In MPA-resistant strain; decreases the K(M) values for both substrates. Decreases sensitivity to MPA 4-fold, but increases sensitivity to mizoribine monophosphate 40-fold." evidence="2">
    <original>A</original>
    <variation>T</variation>
    <location>
        <position position="251"/>
    </location>
</feature>
<proteinExistence type="evidence at protein level"/>
<name>IMDH_CANAL</name>
<reference key="1">
    <citation type="journal article" date="2005" name="J. Biol. Chem.">
        <title>The functional basis of mycophenolic acid resistance in Candida albicans IMP dehydrogenase.</title>
        <authorList>
            <person name="Koehler G.A."/>
            <person name="Gong X."/>
            <person name="Bentink S."/>
            <person name="Theiss S."/>
            <person name="Pagani G.M."/>
            <person name="Agabian N."/>
            <person name="Hedstrom L."/>
        </authorList>
    </citation>
    <scope>NUCLEOTIDE SEQUENCE [GENOMIC DNA]</scope>
    <scope>FUNCTION</scope>
    <scope>ACTIVITY REGULATION</scope>
    <scope>MUTAGENESIS OF ALA-251</scope>
    <scope>BIOPHYSICOCHEMICAL PROPERTIES</scope>
    <source>
        <strain>SC5314 / CAI4 / ATCC MYA-682</strain>
    </source>
</reference>
<reference key="2">
    <citation type="journal article" date="2004" name="Proc. Natl. Acad. Sci. U.S.A.">
        <title>The diploid genome sequence of Candida albicans.</title>
        <authorList>
            <person name="Jones T."/>
            <person name="Federspiel N.A."/>
            <person name="Chibana H."/>
            <person name="Dungan J."/>
            <person name="Kalman S."/>
            <person name="Magee B.B."/>
            <person name="Newport G."/>
            <person name="Thorstenson Y.R."/>
            <person name="Agabian N."/>
            <person name="Magee P.T."/>
            <person name="Davis R.W."/>
            <person name="Scherer S."/>
        </authorList>
    </citation>
    <scope>NUCLEOTIDE SEQUENCE [LARGE SCALE GENOMIC DNA]</scope>
    <source>
        <strain>SC5314 / ATCC MYA-2876</strain>
    </source>
</reference>
<reference key="3">
    <citation type="journal article" date="2007" name="Genome Biol.">
        <title>Assembly of the Candida albicans genome into sixteen supercontigs aligned on the eight chromosomes.</title>
        <authorList>
            <person name="van het Hoog M."/>
            <person name="Rast T.J."/>
            <person name="Martchenko M."/>
            <person name="Grindle S."/>
            <person name="Dignard D."/>
            <person name="Hogues H."/>
            <person name="Cuomo C."/>
            <person name="Berriman M."/>
            <person name="Scherer S."/>
            <person name="Magee B.B."/>
            <person name="Whiteway M."/>
            <person name="Chibana H."/>
            <person name="Nantel A."/>
            <person name="Magee P.T."/>
        </authorList>
    </citation>
    <scope>GENOME REANNOTATION</scope>
    <source>
        <strain>SC5314 / ATCC MYA-2876</strain>
    </source>
</reference>
<reference key="4">
    <citation type="journal article" date="2013" name="Genome Biol.">
        <title>Assembly of a phased diploid Candida albicans genome facilitates allele-specific measurements and provides a simple model for repeat and indel structure.</title>
        <authorList>
            <person name="Muzzey D."/>
            <person name="Schwartz K."/>
            <person name="Weissman J.S."/>
            <person name="Sherlock G."/>
        </authorList>
    </citation>
    <scope>NUCLEOTIDE SEQUENCE [LARGE SCALE GENOMIC DNA]</scope>
    <scope>GENOME REANNOTATION</scope>
    <source>
        <strain>SC5314 / ATCC MYA-2876</strain>
    </source>
</reference>
<accession>Q59Q46</accession>
<accession>A0A1D8PHN9</accession>
<accession>Q5G1M4</accession>
<gene>
    <name type="primary">IMH3</name>
    <name type="synonym">IMD3</name>
    <name type="ordered locus">CAALFM_C206390CA</name>
    <name type="ORF">CaO19.18</name>
    <name type="ORF">CaO19.7689</name>
</gene>
<dbReference type="EC" id="1.1.1.205" evidence="1"/>
<dbReference type="EMBL" id="AY864854">
    <property type="protein sequence ID" value="AAW65379.1"/>
    <property type="molecule type" value="Genomic_DNA"/>
</dbReference>
<dbReference type="EMBL" id="CP017624">
    <property type="protein sequence ID" value="AOW27646.1"/>
    <property type="molecule type" value="Genomic_DNA"/>
</dbReference>
<dbReference type="RefSeq" id="XP_019330790.1">
    <property type="nucleotide sequence ID" value="XM_019475245.1"/>
</dbReference>
<dbReference type="SMR" id="Q59Q46"/>
<dbReference type="FunCoup" id="Q59Q46">
    <property type="interactions" value="1305"/>
</dbReference>
<dbReference type="STRING" id="237561.Q59Q46"/>
<dbReference type="EnsemblFungi" id="C2_06390C_A-T">
    <property type="protein sequence ID" value="C2_06390C_A-T-p1"/>
    <property type="gene ID" value="C2_06390C_A"/>
</dbReference>
<dbReference type="GeneID" id="3646556"/>
<dbReference type="KEGG" id="cal:CAALFM_C206390CA"/>
<dbReference type="CGD" id="CAL0000175344">
    <property type="gene designation" value="IMH3"/>
</dbReference>
<dbReference type="VEuPathDB" id="FungiDB:C2_06390C_A"/>
<dbReference type="eggNOG" id="KOG2550">
    <property type="taxonomic scope" value="Eukaryota"/>
</dbReference>
<dbReference type="HOGENOM" id="CLU_022552_2_1_1"/>
<dbReference type="InParanoid" id="Q59Q46"/>
<dbReference type="OMA" id="MGYCGAK"/>
<dbReference type="OrthoDB" id="416622at2759"/>
<dbReference type="BRENDA" id="1.1.1.205">
    <property type="organism ID" value="1096"/>
</dbReference>
<dbReference type="SABIO-RK" id="Q59Q46"/>
<dbReference type="UniPathway" id="UPA00601">
    <property type="reaction ID" value="UER00295"/>
</dbReference>
<dbReference type="Proteomes" id="UP000000559">
    <property type="component" value="Chromosome 2"/>
</dbReference>
<dbReference type="GO" id="GO:0005737">
    <property type="term" value="C:cytoplasm"/>
    <property type="evidence" value="ECO:0000318"/>
    <property type="project" value="GO_Central"/>
</dbReference>
<dbReference type="GO" id="GO:0003938">
    <property type="term" value="F:IMP dehydrogenase activity"/>
    <property type="evidence" value="ECO:0000315"/>
    <property type="project" value="CGD"/>
</dbReference>
<dbReference type="GO" id="GO:0046872">
    <property type="term" value="F:metal ion binding"/>
    <property type="evidence" value="ECO:0007669"/>
    <property type="project" value="UniProtKB-UniRule"/>
</dbReference>
<dbReference type="GO" id="GO:0000166">
    <property type="term" value="F:nucleotide binding"/>
    <property type="evidence" value="ECO:0007669"/>
    <property type="project" value="UniProtKB-UniRule"/>
</dbReference>
<dbReference type="GO" id="GO:0009267">
    <property type="term" value="P:cellular response to starvation"/>
    <property type="evidence" value="ECO:0000315"/>
    <property type="project" value="CGD"/>
</dbReference>
<dbReference type="GO" id="GO:0030447">
    <property type="term" value="P:filamentous growth"/>
    <property type="evidence" value="ECO:0000315"/>
    <property type="project" value="CGD"/>
</dbReference>
<dbReference type="GO" id="GO:0036180">
    <property type="term" value="P:filamentous growth of a population of unicellular organisms in response to biotic stimulus"/>
    <property type="evidence" value="ECO:0000315"/>
    <property type="project" value="CGD"/>
</dbReference>
<dbReference type="GO" id="GO:0036170">
    <property type="term" value="P:filamentous growth of a population of unicellular organisms in response to starvation"/>
    <property type="evidence" value="ECO:0000315"/>
    <property type="project" value="CGD"/>
</dbReference>
<dbReference type="GO" id="GO:0006177">
    <property type="term" value="P:GMP biosynthetic process"/>
    <property type="evidence" value="ECO:0007669"/>
    <property type="project" value="UniProtKB-UniRule"/>
</dbReference>
<dbReference type="GO" id="GO:0006183">
    <property type="term" value="P:GTP biosynthetic process"/>
    <property type="evidence" value="ECO:0000318"/>
    <property type="project" value="GO_Central"/>
</dbReference>
<dbReference type="GO" id="GO:0052553">
    <property type="term" value="P:symbiont-mediated perturbation of host immune response"/>
    <property type="evidence" value="ECO:0000314"/>
    <property type="project" value="CGD"/>
</dbReference>
<dbReference type="CDD" id="cd04601">
    <property type="entry name" value="CBS_pair_IMPDH"/>
    <property type="match status" value="1"/>
</dbReference>
<dbReference type="CDD" id="cd00381">
    <property type="entry name" value="IMPDH"/>
    <property type="match status" value="1"/>
</dbReference>
<dbReference type="FunFam" id="3.20.20.70:FF:000007">
    <property type="entry name" value="Chromosome 19 SCAF14664, whole genome shotgun sequence"/>
    <property type="match status" value="1"/>
</dbReference>
<dbReference type="Gene3D" id="3.20.20.70">
    <property type="entry name" value="Aldolase class I"/>
    <property type="match status" value="1"/>
</dbReference>
<dbReference type="HAMAP" id="MF_01964">
    <property type="entry name" value="IMPDH"/>
    <property type="match status" value="1"/>
</dbReference>
<dbReference type="InterPro" id="IPR013785">
    <property type="entry name" value="Aldolase_TIM"/>
</dbReference>
<dbReference type="InterPro" id="IPR000644">
    <property type="entry name" value="CBS_dom"/>
</dbReference>
<dbReference type="InterPro" id="IPR046342">
    <property type="entry name" value="CBS_dom_sf"/>
</dbReference>
<dbReference type="InterPro" id="IPR005990">
    <property type="entry name" value="IMP_DH"/>
</dbReference>
<dbReference type="InterPro" id="IPR015875">
    <property type="entry name" value="IMP_DH/GMP_Rdtase_CS"/>
</dbReference>
<dbReference type="InterPro" id="IPR001093">
    <property type="entry name" value="IMP_DH_GMPRt"/>
</dbReference>
<dbReference type="NCBIfam" id="TIGR01302">
    <property type="entry name" value="IMP_dehydrog"/>
    <property type="match status" value="1"/>
</dbReference>
<dbReference type="PANTHER" id="PTHR11911:SF111">
    <property type="entry name" value="INOSINE-5'-MONOPHOSPHATE DEHYDROGENASE"/>
    <property type="match status" value="1"/>
</dbReference>
<dbReference type="PANTHER" id="PTHR11911">
    <property type="entry name" value="INOSINE-5-MONOPHOSPHATE DEHYDROGENASE RELATED"/>
    <property type="match status" value="1"/>
</dbReference>
<dbReference type="Pfam" id="PF00571">
    <property type="entry name" value="CBS"/>
    <property type="match status" value="2"/>
</dbReference>
<dbReference type="Pfam" id="PF00478">
    <property type="entry name" value="IMPDH"/>
    <property type="match status" value="1"/>
</dbReference>
<dbReference type="PIRSF" id="PIRSF000130">
    <property type="entry name" value="IMPDH"/>
    <property type="match status" value="1"/>
</dbReference>
<dbReference type="SMART" id="SM00116">
    <property type="entry name" value="CBS"/>
    <property type="match status" value="2"/>
</dbReference>
<dbReference type="SMART" id="SM01240">
    <property type="entry name" value="IMPDH"/>
    <property type="match status" value="1"/>
</dbReference>
<dbReference type="SUPFAM" id="SSF54631">
    <property type="entry name" value="CBS-domain pair"/>
    <property type="match status" value="1"/>
</dbReference>
<dbReference type="SUPFAM" id="SSF51412">
    <property type="entry name" value="Inosine monophosphate dehydrogenase (IMPDH)"/>
    <property type="match status" value="1"/>
</dbReference>
<dbReference type="PROSITE" id="PS51371">
    <property type="entry name" value="CBS"/>
    <property type="match status" value="2"/>
</dbReference>
<dbReference type="PROSITE" id="PS00487">
    <property type="entry name" value="IMP_DH_GMP_RED"/>
    <property type="match status" value="1"/>
</dbReference>
<evidence type="ECO:0000255" key="1">
    <source>
        <dbReference type="HAMAP-Rule" id="MF_03156"/>
    </source>
</evidence>
<evidence type="ECO:0000269" key="2">
    <source>
    </source>
</evidence>
<keyword id="KW-0129">CBS domain</keyword>
<keyword id="KW-0963">Cytoplasm</keyword>
<keyword id="KW-0332">GMP biosynthesis</keyword>
<keyword id="KW-0479">Metal-binding</keyword>
<keyword id="KW-0520">NAD</keyword>
<keyword id="KW-0560">Oxidoreductase</keyword>
<keyword id="KW-0630">Potassium</keyword>
<keyword id="KW-0658">Purine biosynthesis</keyword>
<keyword id="KW-1185">Reference proteome</keyword>
<keyword id="KW-0677">Repeat</keyword>
<sequence length="521" mass="56239">MVFETSKATSYLKDYPKKDGLSVKELIDSTNFGGLTYNDFLILPGLINFPSSAVSLETKLTKKITLKSPFVSSPMDTVTEENMAIHMALLGGIGIIHHNCTSEEQAEMVRKVKKYENGFINDPVVISPEVTVGEVKKMGEVLGFTSFPVTENGKVGGKLVGIITSRDIQFHEDNKSPVSEVMTKDLVVGKKGISLTDGNELLRSSKKGKLPIVDAEGNLVSLISRTDLQKNQDYPNASKSFHSKQLLCGAAIGTIDADRERLDKLVEAGLDVVVLDSSNGSSVFQLNMIKWIKEKYPELQVIAGNVVTREQAALLIEAGADALRIGMGSGSICITQEVMACGRPQGTAVYGVTEFANKFGVPCIADGGIGNIGHITKALALGASCVMMGGLLAGTAETPGDYFYRDGKRLKTYRGMGSIDAMQQTNTNANASTSRYFSEADKVLVAQGVSGSVVDKGSITKFVPYLYNGLQHSLQDIGIKSIDELRENVDNGEIRFEFRTASAQFEGGVHGLHSYEKRLHN</sequence>
<organism>
    <name type="scientific">Candida albicans (strain SC5314 / ATCC MYA-2876)</name>
    <name type="common">Yeast</name>
    <dbReference type="NCBI Taxonomy" id="237561"/>
    <lineage>
        <taxon>Eukaryota</taxon>
        <taxon>Fungi</taxon>
        <taxon>Dikarya</taxon>
        <taxon>Ascomycota</taxon>
        <taxon>Saccharomycotina</taxon>
        <taxon>Pichiomycetes</taxon>
        <taxon>Debaryomycetaceae</taxon>
        <taxon>Candida/Lodderomyces clade</taxon>
        <taxon>Candida</taxon>
    </lineage>
</organism>
<protein>
    <recommendedName>
        <fullName evidence="1">Inosine-5'-monophosphate dehydrogenase</fullName>
        <shortName evidence="1">IMP dehydrogenase</shortName>
        <shortName evidence="1">IMPD</shortName>
        <shortName evidence="1">IMPDH</shortName>
        <ecNumber evidence="1">1.1.1.205</ecNumber>
    </recommendedName>
</protein>